<protein>
    <recommendedName>
        <fullName evidence="1">Cell division protein ZipA</fullName>
    </recommendedName>
</protein>
<organism>
    <name type="scientific">Mannheimia succiniciproducens (strain KCTC 0769BP / MBEL55E)</name>
    <dbReference type="NCBI Taxonomy" id="221988"/>
    <lineage>
        <taxon>Bacteria</taxon>
        <taxon>Pseudomonadati</taxon>
        <taxon>Pseudomonadota</taxon>
        <taxon>Gammaproteobacteria</taxon>
        <taxon>Pasteurellales</taxon>
        <taxon>Pasteurellaceae</taxon>
        <taxon>Basfia</taxon>
    </lineage>
</organism>
<proteinExistence type="inferred from homology"/>
<reference key="1">
    <citation type="journal article" date="2004" name="Nat. Biotechnol.">
        <title>The genome sequence of the capnophilic rumen bacterium Mannheimia succiniciproducens.</title>
        <authorList>
            <person name="Hong S.H."/>
            <person name="Kim J.S."/>
            <person name="Lee S.Y."/>
            <person name="In Y.H."/>
            <person name="Choi S.S."/>
            <person name="Rih J.-K."/>
            <person name="Kim C.H."/>
            <person name="Jeong H."/>
            <person name="Hur C.G."/>
            <person name="Kim J.J."/>
        </authorList>
    </citation>
    <scope>NUCLEOTIDE SEQUENCE [LARGE SCALE GENOMIC DNA]</scope>
    <source>
        <strain>KCTC 0769BP / MBEL55E</strain>
    </source>
</reference>
<comment type="function">
    <text evidence="1">Essential cell division protein that stabilizes the FtsZ protofilaments by cross-linking them and that serves as a cytoplasmic membrane anchor for the Z ring. Also required for the recruitment to the septal ring of downstream cell division proteins.</text>
</comment>
<comment type="subunit">
    <text evidence="1">Interacts with FtsZ via their C-terminal domains.</text>
</comment>
<comment type="subcellular location">
    <subcellularLocation>
        <location evidence="1">Cell inner membrane</location>
        <topology evidence="1">Single-pass type I membrane protein</topology>
    </subcellularLocation>
    <text evidence="1">Localizes to the Z ring in an FtsZ-dependent manner.</text>
</comment>
<comment type="similarity">
    <text evidence="1">Belongs to the ZipA family.</text>
</comment>
<sequence>MDLNTILIILGILALVALVAHGLWSNRREKSQYFENANTFGRANRQDEPISTPESYKQARNVAPAFTQPKQAVIHQEPPVQQPLNTEPEPITQETPVRAEPQSVDQIKITLPNVEPAPAESAPIYEMRPSRRNTEPQYYQQPSEPYYQQPVQQNLARQTIADIEATVDPNEGVNSSSEYLRTQLQEASQEGNQIFTQSPLSRAPLQQPIEFDQPAQQEKESDNNEDEDVSFVMLYVAAAENRQFQGTVLVQALEDLGFSLGEDNLYHRHLDLTVASPVLFSAANITQPGTFNPYTLHEFFTDGVAIFMRLPSPGNDRTNLKIMIRSAKTLAQQLGGFVLTEQQELFTDAAEEEYLAKIK</sequence>
<evidence type="ECO:0000255" key="1">
    <source>
        <dbReference type="HAMAP-Rule" id="MF_00509"/>
    </source>
</evidence>
<evidence type="ECO:0000256" key="2">
    <source>
        <dbReference type="SAM" id="MobiDB-lite"/>
    </source>
</evidence>
<keyword id="KW-0131">Cell cycle</keyword>
<keyword id="KW-0132">Cell division</keyword>
<keyword id="KW-0997">Cell inner membrane</keyword>
<keyword id="KW-1003">Cell membrane</keyword>
<keyword id="KW-0472">Membrane</keyword>
<keyword id="KW-0812">Transmembrane</keyword>
<keyword id="KW-1133">Transmembrane helix</keyword>
<accession>Q65RN5</accession>
<name>ZIPA_MANSM</name>
<dbReference type="EMBL" id="AE016827">
    <property type="protein sequence ID" value="AAU38375.1"/>
    <property type="molecule type" value="Genomic_DNA"/>
</dbReference>
<dbReference type="RefSeq" id="WP_011200933.1">
    <property type="nucleotide sequence ID" value="NC_006300.1"/>
</dbReference>
<dbReference type="SMR" id="Q65RN5"/>
<dbReference type="STRING" id="221988.MS1768"/>
<dbReference type="KEGG" id="msu:MS1768"/>
<dbReference type="eggNOG" id="COG3115">
    <property type="taxonomic scope" value="Bacteria"/>
</dbReference>
<dbReference type="HOGENOM" id="CLU_030174_1_0_6"/>
<dbReference type="OrthoDB" id="7054914at2"/>
<dbReference type="Proteomes" id="UP000000607">
    <property type="component" value="Chromosome"/>
</dbReference>
<dbReference type="GO" id="GO:0032153">
    <property type="term" value="C:cell division site"/>
    <property type="evidence" value="ECO:0007669"/>
    <property type="project" value="UniProtKB-UniRule"/>
</dbReference>
<dbReference type="GO" id="GO:0005886">
    <property type="term" value="C:plasma membrane"/>
    <property type="evidence" value="ECO:0007669"/>
    <property type="project" value="UniProtKB-SubCell"/>
</dbReference>
<dbReference type="GO" id="GO:0000917">
    <property type="term" value="P:division septum assembly"/>
    <property type="evidence" value="ECO:0007669"/>
    <property type="project" value="TreeGrafter"/>
</dbReference>
<dbReference type="GO" id="GO:0043093">
    <property type="term" value="P:FtsZ-dependent cytokinesis"/>
    <property type="evidence" value="ECO:0007669"/>
    <property type="project" value="UniProtKB-UniRule"/>
</dbReference>
<dbReference type="Gene3D" id="3.30.1400.10">
    <property type="entry name" value="ZipA, C-terminal FtsZ-binding domain"/>
    <property type="match status" value="1"/>
</dbReference>
<dbReference type="HAMAP" id="MF_00509">
    <property type="entry name" value="ZipA"/>
    <property type="match status" value="1"/>
</dbReference>
<dbReference type="InterPro" id="IPR011919">
    <property type="entry name" value="Cell_div_ZipA"/>
</dbReference>
<dbReference type="InterPro" id="IPR007449">
    <property type="entry name" value="ZipA_FtsZ-bd_C"/>
</dbReference>
<dbReference type="InterPro" id="IPR036765">
    <property type="entry name" value="ZipA_FtsZ-bd_C_sf"/>
</dbReference>
<dbReference type="NCBIfam" id="TIGR02205">
    <property type="entry name" value="septum_zipA"/>
    <property type="match status" value="1"/>
</dbReference>
<dbReference type="PANTHER" id="PTHR38685">
    <property type="entry name" value="CELL DIVISION PROTEIN ZIPA"/>
    <property type="match status" value="1"/>
</dbReference>
<dbReference type="PANTHER" id="PTHR38685:SF1">
    <property type="entry name" value="CELL DIVISION PROTEIN ZIPA"/>
    <property type="match status" value="1"/>
</dbReference>
<dbReference type="Pfam" id="PF04354">
    <property type="entry name" value="ZipA_C"/>
    <property type="match status" value="1"/>
</dbReference>
<dbReference type="SMART" id="SM00771">
    <property type="entry name" value="ZipA_C"/>
    <property type="match status" value="1"/>
</dbReference>
<dbReference type="SUPFAM" id="SSF64383">
    <property type="entry name" value="Cell-division protein ZipA, C-terminal domain"/>
    <property type="match status" value="1"/>
</dbReference>
<gene>
    <name evidence="1" type="primary">zipA</name>
    <name type="ordered locus">MS1768</name>
</gene>
<feature type="chain" id="PRO_0000214527" description="Cell division protein ZipA">
    <location>
        <begin position="1"/>
        <end position="359"/>
    </location>
</feature>
<feature type="topological domain" description="Periplasmic" evidence="1">
    <location>
        <begin position="1"/>
        <end position="4"/>
    </location>
</feature>
<feature type="transmembrane region" description="Helical" evidence="1">
    <location>
        <begin position="5"/>
        <end position="25"/>
    </location>
</feature>
<feature type="topological domain" description="Cytoplasmic" evidence="1">
    <location>
        <begin position="26"/>
        <end position="359"/>
    </location>
</feature>
<feature type="region of interest" description="Disordered" evidence="2">
    <location>
        <begin position="78"/>
        <end position="101"/>
    </location>
</feature>